<feature type="chain" id="PRO_0000229874" description="23S rRNA (uracil(1939)-C(5))-methyltransferase RlmD">
    <location>
        <begin position="1"/>
        <end position="447"/>
    </location>
</feature>
<feature type="domain" description="TRAM" evidence="1">
    <location>
        <begin position="7"/>
        <end position="66"/>
    </location>
</feature>
<feature type="active site" description="Nucleophile" evidence="1">
    <location>
        <position position="400"/>
    </location>
</feature>
<feature type="binding site" evidence="1">
    <location>
        <position position="79"/>
    </location>
    <ligand>
        <name>[4Fe-4S] cluster</name>
        <dbReference type="ChEBI" id="CHEBI:49883"/>
    </ligand>
</feature>
<feature type="binding site" evidence="1">
    <location>
        <position position="85"/>
    </location>
    <ligand>
        <name>[4Fe-4S] cluster</name>
        <dbReference type="ChEBI" id="CHEBI:49883"/>
    </ligand>
</feature>
<feature type="binding site" evidence="1">
    <location>
        <position position="88"/>
    </location>
    <ligand>
        <name>[4Fe-4S] cluster</name>
        <dbReference type="ChEBI" id="CHEBI:49883"/>
    </ligand>
</feature>
<feature type="binding site" evidence="1">
    <location>
        <position position="168"/>
    </location>
    <ligand>
        <name>[4Fe-4S] cluster</name>
        <dbReference type="ChEBI" id="CHEBI:49883"/>
    </ligand>
</feature>
<feature type="binding site" evidence="1">
    <location>
        <position position="275"/>
    </location>
    <ligand>
        <name>S-adenosyl-L-methionine</name>
        <dbReference type="ChEBI" id="CHEBI:59789"/>
    </ligand>
</feature>
<feature type="binding site" evidence="1">
    <location>
        <position position="304"/>
    </location>
    <ligand>
        <name>S-adenosyl-L-methionine</name>
        <dbReference type="ChEBI" id="CHEBI:59789"/>
    </ligand>
</feature>
<feature type="binding site" evidence="1">
    <location>
        <position position="309"/>
    </location>
    <ligand>
        <name>S-adenosyl-L-methionine</name>
        <dbReference type="ChEBI" id="CHEBI:59789"/>
    </ligand>
</feature>
<feature type="binding site" evidence="1">
    <location>
        <position position="325"/>
    </location>
    <ligand>
        <name>S-adenosyl-L-methionine</name>
        <dbReference type="ChEBI" id="CHEBI:59789"/>
    </ligand>
</feature>
<feature type="binding site" evidence="1">
    <location>
        <position position="352"/>
    </location>
    <ligand>
        <name>S-adenosyl-L-methionine</name>
        <dbReference type="ChEBI" id="CHEBI:59789"/>
    </ligand>
</feature>
<feature type="binding site" evidence="1">
    <location>
        <position position="374"/>
    </location>
    <ligand>
        <name>S-adenosyl-L-methionine</name>
        <dbReference type="ChEBI" id="CHEBI:59789"/>
    </ligand>
</feature>
<proteinExistence type="inferred from homology"/>
<dbReference type="EC" id="2.1.1.190" evidence="1"/>
<dbReference type="EMBL" id="CP000127">
    <property type="protein sequence ID" value="ABA57314.1"/>
    <property type="molecule type" value="Genomic_DNA"/>
</dbReference>
<dbReference type="RefSeq" id="WP_011330486.1">
    <property type="nucleotide sequence ID" value="NC_007484.1"/>
</dbReference>
<dbReference type="SMR" id="Q3JCY2"/>
<dbReference type="FunCoup" id="Q3JCY2">
    <property type="interactions" value="436"/>
</dbReference>
<dbReference type="STRING" id="323261.Noc_0801"/>
<dbReference type="KEGG" id="noc:Noc_0801"/>
<dbReference type="eggNOG" id="COG2265">
    <property type="taxonomic scope" value="Bacteria"/>
</dbReference>
<dbReference type="HOGENOM" id="CLU_014689_8_2_6"/>
<dbReference type="InParanoid" id="Q3JCY2"/>
<dbReference type="Proteomes" id="UP000006838">
    <property type="component" value="Chromosome"/>
</dbReference>
<dbReference type="GO" id="GO:0051539">
    <property type="term" value="F:4 iron, 4 sulfur cluster binding"/>
    <property type="evidence" value="ECO:0007669"/>
    <property type="project" value="UniProtKB-KW"/>
</dbReference>
<dbReference type="GO" id="GO:0005506">
    <property type="term" value="F:iron ion binding"/>
    <property type="evidence" value="ECO:0007669"/>
    <property type="project" value="UniProtKB-UniRule"/>
</dbReference>
<dbReference type="GO" id="GO:0003723">
    <property type="term" value="F:RNA binding"/>
    <property type="evidence" value="ECO:0007669"/>
    <property type="project" value="InterPro"/>
</dbReference>
<dbReference type="GO" id="GO:0070041">
    <property type="term" value="F:rRNA (uridine-C5-)-methyltransferase activity"/>
    <property type="evidence" value="ECO:0007669"/>
    <property type="project" value="UniProtKB-UniRule"/>
</dbReference>
<dbReference type="GO" id="GO:0070475">
    <property type="term" value="P:rRNA base methylation"/>
    <property type="evidence" value="ECO:0007669"/>
    <property type="project" value="TreeGrafter"/>
</dbReference>
<dbReference type="CDD" id="cd02440">
    <property type="entry name" value="AdoMet_MTases"/>
    <property type="match status" value="1"/>
</dbReference>
<dbReference type="FunFam" id="2.40.50.140:FF:000097">
    <property type="entry name" value="23S rRNA (uracil(1939)-C(5))-methyltransferase RlmD"/>
    <property type="match status" value="1"/>
</dbReference>
<dbReference type="Gene3D" id="2.40.50.1070">
    <property type="match status" value="1"/>
</dbReference>
<dbReference type="Gene3D" id="2.40.50.140">
    <property type="entry name" value="Nucleic acid-binding proteins"/>
    <property type="match status" value="1"/>
</dbReference>
<dbReference type="Gene3D" id="3.40.50.150">
    <property type="entry name" value="Vaccinia Virus protein VP39"/>
    <property type="match status" value="1"/>
</dbReference>
<dbReference type="HAMAP" id="MF_01010">
    <property type="entry name" value="23SrRNA_methyltr_RlmD"/>
    <property type="match status" value="1"/>
</dbReference>
<dbReference type="InterPro" id="IPR001566">
    <property type="entry name" value="23S_rRNA_MeTrfase_RlmD"/>
</dbReference>
<dbReference type="InterPro" id="IPR030390">
    <property type="entry name" value="MeTrfase_TrmA_AS"/>
</dbReference>
<dbReference type="InterPro" id="IPR030391">
    <property type="entry name" value="MeTrfase_TrmA_CS"/>
</dbReference>
<dbReference type="InterPro" id="IPR012340">
    <property type="entry name" value="NA-bd_OB-fold"/>
</dbReference>
<dbReference type="InterPro" id="IPR029063">
    <property type="entry name" value="SAM-dependent_MTases_sf"/>
</dbReference>
<dbReference type="InterPro" id="IPR002792">
    <property type="entry name" value="TRAM_dom"/>
</dbReference>
<dbReference type="InterPro" id="IPR010280">
    <property type="entry name" value="U5_MeTrfase_fam"/>
</dbReference>
<dbReference type="NCBIfam" id="NF009639">
    <property type="entry name" value="PRK13168.1"/>
    <property type="match status" value="1"/>
</dbReference>
<dbReference type="NCBIfam" id="TIGR00479">
    <property type="entry name" value="rumA"/>
    <property type="match status" value="1"/>
</dbReference>
<dbReference type="PANTHER" id="PTHR11061:SF49">
    <property type="entry name" value="23S RRNA (URACIL(1939)-C(5))-METHYLTRANSFERASE RLMD"/>
    <property type="match status" value="1"/>
</dbReference>
<dbReference type="PANTHER" id="PTHR11061">
    <property type="entry name" value="RNA M5U METHYLTRANSFERASE"/>
    <property type="match status" value="1"/>
</dbReference>
<dbReference type="Pfam" id="PF01938">
    <property type="entry name" value="TRAM"/>
    <property type="match status" value="1"/>
</dbReference>
<dbReference type="Pfam" id="PF05958">
    <property type="entry name" value="tRNA_U5-meth_tr"/>
    <property type="match status" value="1"/>
</dbReference>
<dbReference type="SUPFAM" id="SSF50249">
    <property type="entry name" value="Nucleic acid-binding proteins"/>
    <property type="match status" value="1"/>
</dbReference>
<dbReference type="SUPFAM" id="SSF53335">
    <property type="entry name" value="S-adenosyl-L-methionine-dependent methyltransferases"/>
    <property type="match status" value="1"/>
</dbReference>
<dbReference type="PROSITE" id="PS51687">
    <property type="entry name" value="SAM_MT_RNA_M5U"/>
    <property type="match status" value="1"/>
</dbReference>
<dbReference type="PROSITE" id="PS50926">
    <property type="entry name" value="TRAM"/>
    <property type="match status" value="1"/>
</dbReference>
<dbReference type="PROSITE" id="PS01230">
    <property type="entry name" value="TRMA_1"/>
    <property type="match status" value="1"/>
</dbReference>
<dbReference type="PROSITE" id="PS01231">
    <property type="entry name" value="TRMA_2"/>
    <property type="match status" value="1"/>
</dbReference>
<evidence type="ECO:0000255" key="1">
    <source>
        <dbReference type="HAMAP-Rule" id="MF_01010"/>
    </source>
</evidence>
<sequence length="447" mass="49575">MAHHPKRKPLSQEPQKASIEALTHEGRGIAHVAGKTVFIDGALPGETVWFHYLRRRGKFDEGRVLEVLQPAPSRVEPRCRHFGVCGGCSLQHLSTAAQLQLKQVTVREQFRHFGGVEPEQWLPPLVGGGYWGYRYKARLGVKFVKKKDRVLVGFREKGSSLIAALEGCEVLHPSVGYLLPALGELIASLSCYDRIPQIEVAAGDQSTGLVFRHLVPLTTADTEQLVAFGQAHKLQIYLQGGGAETVRLLWPAGARLSYSQFGKLEMIFLPTDFTQVNREVNTKMVRRVLELLEIKSGERVLDLFCGIGNFTLPLAIAGAEVVGIEGNAGLVARAVANATHNRLENAYFEMADLNGAEWTHYVWAREGFSKALLDPPRSGALLAVQQMSKLRVQRIVYVSCNPATLARDAGELVNRQGYRLRYAGVIDMFPHTTHVETLALFEQTRKH</sequence>
<protein>
    <recommendedName>
        <fullName evidence="1">23S rRNA (uracil(1939)-C(5))-methyltransferase RlmD</fullName>
        <ecNumber evidence="1">2.1.1.190</ecNumber>
    </recommendedName>
    <alternativeName>
        <fullName evidence="1">23S rRNA(m5U1939)-methyltransferase</fullName>
    </alternativeName>
</protein>
<comment type="function">
    <text evidence="1">Catalyzes the formation of 5-methyl-uridine at position 1939 (m5U1939) in 23S rRNA.</text>
</comment>
<comment type="catalytic activity">
    <reaction evidence="1">
        <text>uridine(1939) in 23S rRNA + S-adenosyl-L-methionine = 5-methyluridine(1939) in 23S rRNA + S-adenosyl-L-homocysteine + H(+)</text>
        <dbReference type="Rhea" id="RHEA:42908"/>
        <dbReference type="Rhea" id="RHEA-COMP:10278"/>
        <dbReference type="Rhea" id="RHEA-COMP:10279"/>
        <dbReference type="ChEBI" id="CHEBI:15378"/>
        <dbReference type="ChEBI" id="CHEBI:57856"/>
        <dbReference type="ChEBI" id="CHEBI:59789"/>
        <dbReference type="ChEBI" id="CHEBI:65315"/>
        <dbReference type="ChEBI" id="CHEBI:74447"/>
        <dbReference type="EC" id="2.1.1.190"/>
    </reaction>
</comment>
<comment type="similarity">
    <text evidence="1">Belongs to the class I-like SAM-binding methyltransferase superfamily. RNA M5U methyltransferase family. RlmD subfamily.</text>
</comment>
<gene>
    <name evidence="1" type="primary">rlmD</name>
    <name type="synonym">rumA</name>
    <name type="ordered locus">Noc_0801</name>
</gene>
<keyword id="KW-0004">4Fe-4S</keyword>
<keyword id="KW-0408">Iron</keyword>
<keyword id="KW-0411">Iron-sulfur</keyword>
<keyword id="KW-0479">Metal-binding</keyword>
<keyword id="KW-0489">Methyltransferase</keyword>
<keyword id="KW-1185">Reference proteome</keyword>
<keyword id="KW-0698">rRNA processing</keyword>
<keyword id="KW-0949">S-adenosyl-L-methionine</keyword>
<keyword id="KW-0808">Transferase</keyword>
<organism>
    <name type="scientific">Nitrosococcus oceani (strain ATCC 19707 / BCRC 17464 / JCM 30415 / NCIMB 11848 / C-107)</name>
    <dbReference type="NCBI Taxonomy" id="323261"/>
    <lineage>
        <taxon>Bacteria</taxon>
        <taxon>Pseudomonadati</taxon>
        <taxon>Pseudomonadota</taxon>
        <taxon>Gammaproteobacteria</taxon>
        <taxon>Chromatiales</taxon>
        <taxon>Chromatiaceae</taxon>
        <taxon>Nitrosococcus</taxon>
    </lineage>
</organism>
<accession>Q3JCY2</accession>
<name>RLMD_NITOC</name>
<reference key="1">
    <citation type="journal article" date="2006" name="Appl. Environ. Microbiol.">
        <title>Complete genome sequence of the marine, chemolithoautotrophic, ammonia-oxidizing bacterium Nitrosococcus oceani ATCC 19707.</title>
        <authorList>
            <person name="Klotz M.G."/>
            <person name="Arp D.J."/>
            <person name="Chain P.S.G."/>
            <person name="El-Sheikh A.F."/>
            <person name="Hauser L.J."/>
            <person name="Hommes N.G."/>
            <person name="Larimer F.W."/>
            <person name="Malfatti S.A."/>
            <person name="Norton J.M."/>
            <person name="Poret-Peterson A.T."/>
            <person name="Vergez L.M."/>
            <person name="Ward B.B."/>
        </authorList>
    </citation>
    <scope>NUCLEOTIDE SEQUENCE [LARGE SCALE GENOMIC DNA]</scope>
    <source>
        <strain>ATCC 19707 / BCRC 17464 / JCM 30415 / NCIMB 11848 / C-107</strain>
    </source>
</reference>